<sequence>MRWKRTIQLLDVHCEGEIGRVAIGGVPKIPGNTVAEQLHWLNTDPKGEELRRFLVLEPRGAPIGSVNLLLPARHPDADAAFIILQPDQAHASSGSNSICVTTALLESGIVEMKEPETVVTLETAAGLVRATATCRDGRCEKVRLTMVPSFVHELDVGIDTPQWGRIKLDLCYGGIFYALVDVGQIGLTIGKANAASLVQAGMVLKELINRTVPVVHPEIPAISGVAYVMFRDIDADGAIRTCTTMWPGRADRSPCGTGNSANLATLHARGKARVGDVFKSRSIIGSEFEVGLQAETEVAGKPAIIPTITGRGFTFGLSQVALDPFDPMANGFALTDVWGPLAGDI</sequence>
<dbReference type="EC" id="5.1.1.8" evidence="2"/>
<dbReference type="EMBL" id="CP000628">
    <property type="protein sequence ID" value="ACM25355.1"/>
    <property type="molecule type" value="Genomic_DNA"/>
</dbReference>
<dbReference type="RefSeq" id="WP_012650895.1">
    <property type="nucleotide sequence ID" value="NC_011985.1"/>
</dbReference>
<dbReference type="PDB" id="4Q2H">
    <property type="method" value="X-ray"/>
    <property type="resolution" value="1.80 A"/>
    <property type="chains" value="A/B=1-345"/>
</dbReference>
<dbReference type="PDBsum" id="4Q2H"/>
<dbReference type="SMR" id="B9J8G8"/>
<dbReference type="STRING" id="311403.Arad_0731"/>
<dbReference type="KEGG" id="ara:Arad_0731"/>
<dbReference type="eggNOG" id="COG3938">
    <property type="taxonomic scope" value="Bacteria"/>
</dbReference>
<dbReference type="HOGENOM" id="CLU_036729_2_0_5"/>
<dbReference type="EvolutionaryTrace" id="B9J8G8"/>
<dbReference type="Proteomes" id="UP000001600">
    <property type="component" value="Chromosome 1"/>
</dbReference>
<dbReference type="GO" id="GO:0047580">
    <property type="term" value="F:4-hydroxyproline epimerase activity"/>
    <property type="evidence" value="ECO:0007669"/>
    <property type="project" value="UniProtKB-EC"/>
</dbReference>
<dbReference type="GO" id="GO:0050346">
    <property type="term" value="F:trans-L-3-hydroxyproline dehydratase activity"/>
    <property type="evidence" value="ECO:0007669"/>
    <property type="project" value="UniProtKB-ARBA"/>
</dbReference>
<dbReference type="FunFam" id="3.10.310.10:FF:000005">
    <property type="entry name" value="Proline racemase"/>
    <property type="match status" value="1"/>
</dbReference>
<dbReference type="Gene3D" id="3.10.310.10">
    <property type="entry name" value="Diaminopimelate Epimerase, Chain A, domain 1"/>
    <property type="match status" value="2"/>
</dbReference>
<dbReference type="InterPro" id="IPR008794">
    <property type="entry name" value="Pro_racemase_fam"/>
</dbReference>
<dbReference type="PANTHER" id="PTHR33442:SF5">
    <property type="entry name" value="BIFUNCTIONAL TRANS-3-HYDROXY-L-PROLINE DEHYDRATASE_2-EPIMERASE"/>
    <property type="match status" value="1"/>
</dbReference>
<dbReference type="PANTHER" id="PTHR33442">
    <property type="entry name" value="TRANS-3-HYDROXY-L-PROLINE DEHYDRATASE"/>
    <property type="match status" value="1"/>
</dbReference>
<dbReference type="Pfam" id="PF05544">
    <property type="entry name" value="Pro_racemase"/>
    <property type="match status" value="1"/>
</dbReference>
<dbReference type="PIRSF" id="PIRSF029792">
    <property type="entry name" value="Pro_racemase"/>
    <property type="match status" value="1"/>
</dbReference>
<dbReference type="SFLD" id="SFLDS00028">
    <property type="entry name" value="Proline_Racemase"/>
    <property type="match status" value="1"/>
</dbReference>
<dbReference type="SUPFAM" id="SSF54506">
    <property type="entry name" value="Diaminopimelate epimerase-like"/>
    <property type="match status" value="1"/>
</dbReference>
<organism>
    <name type="scientific">Rhizobium rhizogenes (strain K84 / ATCC BAA-868)</name>
    <name type="common">Agrobacterium radiobacter</name>
    <dbReference type="NCBI Taxonomy" id="311403"/>
    <lineage>
        <taxon>Bacteria</taxon>
        <taxon>Pseudomonadati</taxon>
        <taxon>Pseudomonadota</taxon>
        <taxon>Alphaproteobacteria</taxon>
        <taxon>Hyphomicrobiales</taxon>
        <taxon>Rhizobiaceae</taxon>
        <taxon>Rhizobium/Agrobacterium group</taxon>
        <taxon>Rhizobium</taxon>
    </lineage>
</organism>
<comment type="function">
    <text evidence="2">Catalyzes the epimerization of trans-4-hydroxy-L-proline (t4LHyp) to cis-4-hydroxy-D-proline (c4DHyp). May be involved in a degradation pathway of t4LHyp. Can also catalyze the epimerization of trans-3-hydroxy-L-proline (t3LHyp) to cis-3-hydroxy-D-proline (c3DHyp) in vitro. Displays no proline racemase activity.</text>
</comment>
<comment type="catalytic activity">
    <reaction evidence="2">
        <text>trans-4-hydroxy-L-proline = cis-4-hydroxy-D-proline</text>
        <dbReference type="Rhea" id="RHEA:21152"/>
        <dbReference type="ChEBI" id="CHEBI:57690"/>
        <dbReference type="ChEBI" id="CHEBI:58375"/>
        <dbReference type="EC" id="5.1.1.8"/>
    </reaction>
</comment>
<comment type="similarity">
    <text evidence="4">Belongs to the proline racemase family.</text>
</comment>
<accession>B9J8G8</accession>
<proteinExistence type="evidence at protein level"/>
<evidence type="ECO:0000250" key="1">
    <source>
        <dbReference type="UniProtKB" id="B9JQV3"/>
    </source>
</evidence>
<evidence type="ECO:0000269" key="2">
    <source>
    </source>
</evidence>
<evidence type="ECO:0000303" key="3">
    <source>
    </source>
</evidence>
<evidence type="ECO:0000305" key="4"/>
<evidence type="ECO:0000312" key="5">
    <source>
        <dbReference type="EMBL" id="ACM25355.1"/>
    </source>
</evidence>
<evidence type="ECO:0007829" key="6">
    <source>
        <dbReference type="PDB" id="4Q2H"/>
    </source>
</evidence>
<feature type="chain" id="PRO_0000432266" description="4-hydroxyproline 2-epimerase 1">
    <location>
        <begin position="1"/>
        <end position="345"/>
    </location>
</feature>
<feature type="active site" description="Proton acceptor" evidence="1">
    <location>
        <position position="93"/>
    </location>
</feature>
<feature type="active site" description="Proton donor" evidence="1">
    <location>
        <position position="255"/>
    </location>
</feature>
<feature type="binding site" evidence="1">
    <location>
        <position position="85"/>
    </location>
    <ligand>
        <name>substrate</name>
    </ligand>
</feature>
<feature type="binding site" evidence="1">
    <location>
        <begin position="94"/>
        <end position="95"/>
    </location>
    <ligand>
        <name>substrate</name>
    </ligand>
</feature>
<feature type="binding site" evidence="1">
    <location>
        <position position="251"/>
    </location>
    <ligand>
        <name>substrate</name>
    </ligand>
</feature>
<feature type="binding site" evidence="1">
    <location>
        <begin position="256"/>
        <end position="257"/>
    </location>
    <ligand>
        <name>substrate</name>
    </ligand>
</feature>
<feature type="strand" evidence="6">
    <location>
        <begin position="6"/>
        <end position="14"/>
    </location>
</feature>
<feature type="strand" evidence="6">
    <location>
        <begin position="17"/>
        <end position="24"/>
    </location>
</feature>
<feature type="helix" evidence="6">
    <location>
        <begin position="34"/>
        <end position="43"/>
    </location>
</feature>
<feature type="helix" evidence="6">
    <location>
        <begin position="45"/>
        <end position="55"/>
    </location>
</feature>
<feature type="strand" evidence="6">
    <location>
        <begin position="65"/>
        <end position="70"/>
    </location>
</feature>
<feature type="strand" evidence="6">
    <location>
        <begin position="78"/>
        <end position="84"/>
    </location>
</feature>
<feature type="strand" evidence="6">
    <location>
        <begin position="89"/>
        <end position="91"/>
    </location>
</feature>
<feature type="helix" evidence="6">
    <location>
        <begin position="94"/>
        <end position="106"/>
    </location>
</feature>
<feature type="strand" evidence="6">
    <location>
        <begin position="114"/>
        <end position="123"/>
    </location>
</feature>
<feature type="strand" evidence="6">
    <location>
        <begin position="126"/>
        <end position="135"/>
    </location>
</feature>
<feature type="strand" evidence="6">
    <location>
        <begin position="138"/>
        <end position="145"/>
    </location>
</feature>
<feature type="strand" evidence="6">
    <location>
        <begin position="149"/>
        <end position="160"/>
    </location>
</feature>
<feature type="turn" evidence="6">
    <location>
        <begin position="161"/>
        <end position="163"/>
    </location>
</feature>
<feature type="strand" evidence="6">
    <location>
        <begin position="164"/>
        <end position="181"/>
    </location>
</feature>
<feature type="helix" evidence="6">
    <location>
        <begin position="182"/>
        <end position="185"/>
    </location>
</feature>
<feature type="helix" evidence="6">
    <location>
        <begin position="191"/>
        <end position="193"/>
    </location>
</feature>
<feature type="helix" evidence="6">
    <location>
        <begin position="194"/>
        <end position="211"/>
    </location>
</feature>
<feature type="strand" evidence="6">
    <location>
        <begin position="223"/>
        <end position="233"/>
    </location>
</feature>
<feature type="strand" evidence="6">
    <location>
        <begin position="239"/>
        <end position="245"/>
    </location>
</feature>
<feature type="turn" evidence="6">
    <location>
        <begin position="246"/>
        <end position="248"/>
    </location>
</feature>
<feature type="helix" evidence="6">
    <location>
        <begin position="256"/>
        <end position="268"/>
    </location>
</feature>
<feature type="strand" evidence="6">
    <location>
        <begin position="277"/>
        <end position="281"/>
    </location>
</feature>
<feature type="strand" evidence="6">
    <location>
        <begin position="287"/>
        <end position="298"/>
    </location>
</feature>
<feature type="strand" evidence="6">
    <location>
        <begin position="301"/>
        <end position="310"/>
    </location>
</feature>
<feature type="strand" evidence="6">
    <location>
        <begin position="312"/>
        <end position="321"/>
    </location>
</feature>
<feature type="turn" evidence="6">
    <location>
        <begin position="327"/>
        <end position="330"/>
    </location>
</feature>
<feature type="helix" evidence="6">
    <location>
        <begin position="335"/>
        <end position="338"/>
    </location>
</feature>
<feature type="helix" evidence="6">
    <location>
        <begin position="342"/>
        <end position="344"/>
    </location>
</feature>
<keyword id="KW-0002">3D-structure</keyword>
<keyword id="KW-0413">Isomerase</keyword>
<gene>
    <name evidence="5" type="ordered locus">Arad_0731</name>
</gene>
<protein>
    <recommendedName>
        <fullName evidence="3">4-hydroxyproline 2-epimerase 1</fullName>
        <shortName>4Hyp 2-epimerase 1</shortName>
        <shortName evidence="3">4HypE 1</shortName>
        <ecNumber evidence="2">5.1.1.8</ecNumber>
    </recommendedName>
</protein>
<name>4HPE1_RHIR8</name>
<reference key="1">
    <citation type="journal article" date="2009" name="J. Bacteriol.">
        <title>Genome sequences of three Agrobacterium biovars help elucidate the evolution of multichromosome genomes in bacteria.</title>
        <authorList>
            <person name="Slater S.C."/>
            <person name="Goldman B.S."/>
            <person name="Goodner B."/>
            <person name="Setubal J.C."/>
            <person name="Farrand S.K."/>
            <person name="Nester E.W."/>
            <person name="Burr T.J."/>
            <person name="Banta L."/>
            <person name="Dickerman A.W."/>
            <person name="Paulsen I."/>
            <person name="Otten L."/>
            <person name="Suen G."/>
            <person name="Welch R."/>
            <person name="Almeida N.F."/>
            <person name="Arnold F."/>
            <person name="Burton O.T."/>
            <person name="Du Z."/>
            <person name="Ewing A."/>
            <person name="Godsy E."/>
            <person name="Heisel S."/>
            <person name="Houmiel K.L."/>
            <person name="Jhaveri J."/>
            <person name="Lu J."/>
            <person name="Miller N.M."/>
            <person name="Norton S."/>
            <person name="Chen Q."/>
            <person name="Phoolcharoen W."/>
            <person name="Ohlin V."/>
            <person name="Ondrusek D."/>
            <person name="Pride N."/>
            <person name="Stricklin S.L."/>
            <person name="Sun J."/>
            <person name="Wheeler C."/>
            <person name="Wilson L."/>
            <person name="Zhu H."/>
            <person name="Wood D.W."/>
        </authorList>
    </citation>
    <scope>NUCLEOTIDE SEQUENCE [LARGE SCALE GENOMIC DNA]</scope>
    <source>
        <strain>K84 / ATCC BAA-868</strain>
    </source>
</reference>
<reference key="2">
    <citation type="journal article" date="2014" name="Elife">
        <title>Prediction and characterization of enzymatic activities guided by sequence similarity and genome neighborhood networks.</title>
        <authorList>
            <person name="Zhao S."/>
            <person name="Sakai A."/>
            <person name="Zhang X."/>
            <person name="Vetting M.W."/>
            <person name="Kumar R."/>
            <person name="Hillerich B."/>
            <person name="San Francisco B."/>
            <person name="Solbiati J."/>
            <person name="Steves A."/>
            <person name="Brown S."/>
            <person name="Akiva E."/>
            <person name="Barber A."/>
            <person name="Seidel R.D."/>
            <person name="Babbitt P.C."/>
            <person name="Almo S.C."/>
            <person name="Gerlt J.A."/>
            <person name="Jacobson M.P."/>
        </authorList>
    </citation>
    <scope>FUNCTION</scope>
    <scope>CATALYTIC ACTIVITY</scope>
</reference>
<reference key="3">
    <citation type="submission" date="2014-04" db="PDB data bank">
        <title>Crystal structure of proline racemase Arad_0731 from Agrobacterium radiobacter, target Efi-506561.</title>
        <authorList>
            <consortium name="Enzyme Function Initiative (EFI)"/>
            <person name="Patskovsky Y."/>
            <person name="Toro R."/>
            <person name="Bhosle R."/>
            <person name="Al Obaidi N.F."/>
            <person name="Morisco L.L."/>
            <person name="Wasserman S.R."/>
            <person name="Sojitra S."/>
            <person name="Stead M."/>
            <person name="Washington E."/>
            <person name="Glenn A.S."/>
            <person name="Chowdhury S."/>
            <person name="Evans B."/>
            <person name="Hammonds J."/>
            <person name="Hillerich B."/>
            <person name="Love J."/>
            <person name="Seidel R.D."/>
            <person name="Gerlt J.A."/>
            <person name="Almo S.C."/>
        </authorList>
    </citation>
    <scope>X-RAY CRYSTALLOGRAPHY (1.80 ANGSTROMS)</scope>
</reference>